<name>SYP_UREU1</name>
<keyword id="KW-0030">Aminoacyl-tRNA synthetase</keyword>
<keyword id="KW-0067">ATP-binding</keyword>
<keyword id="KW-0963">Cytoplasm</keyword>
<keyword id="KW-0436">Ligase</keyword>
<keyword id="KW-0547">Nucleotide-binding</keyword>
<keyword id="KW-0648">Protein biosynthesis</keyword>
<evidence type="ECO:0000255" key="1">
    <source>
        <dbReference type="HAMAP-Rule" id="MF_01571"/>
    </source>
</evidence>
<feature type="chain" id="PRO_1000215583" description="Proline--tRNA ligase">
    <location>
        <begin position="1"/>
        <end position="472"/>
    </location>
</feature>
<accession>B5ZBT9</accession>
<dbReference type="EC" id="6.1.1.15" evidence="1"/>
<dbReference type="EMBL" id="CP001184">
    <property type="protein sequence ID" value="ACI60010.1"/>
    <property type="molecule type" value="Genomic_DNA"/>
</dbReference>
<dbReference type="RefSeq" id="WP_004026194.1">
    <property type="nucleotide sequence ID" value="NC_011374.1"/>
</dbReference>
<dbReference type="SMR" id="B5ZBT9"/>
<dbReference type="STRING" id="565575.UUR10_0487"/>
<dbReference type="GeneID" id="93848959"/>
<dbReference type="KEGG" id="uue:UUR10_0487"/>
<dbReference type="eggNOG" id="COG0441">
    <property type="taxonomic scope" value="Bacteria"/>
</dbReference>
<dbReference type="HOGENOM" id="CLU_001882_4_2_14"/>
<dbReference type="OrthoDB" id="9809052at2"/>
<dbReference type="Proteomes" id="UP000002018">
    <property type="component" value="Chromosome"/>
</dbReference>
<dbReference type="GO" id="GO:0017101">
    <property type="term" value="C:aminoacyl-tRNA synthetase multienzyme complex"/>
    <property type="evidence" value="ECO:0007669"/>
    <property type="project" value="TreeGrafter"/>
</dbReference>
<dbReference type="GO" id="GO:0005737">
    <property type="term" value="C:cytoplasm"/>
    <property type="evidence" value="ECO:0007669"/>
    <property type="project" value="UniProtKB-SubCell"/>
</dbReference>
<dbReference type="GO" id="GO:0005524">
    <property type="term" value="F:ATP binding"/>
    <property type="evidence" value="ECO:0007669"/>
    <property type="project" value="UniProtKB-UniRule"/>
</dbReference>
<dbReference type="GO" id="GO:0004827">
    <property type="term" value="F:proline-tRNA ligase activity"/>
    <property type="evidence" value="ECO:0007669"/>
    <property type="project" value="UniProtKB-UniRule"/>
</dbReference>
<dbReference type="GO" id="GO:0006433">
    <property type="term" value="P:prolyl-tRNA aminoacylation"/>
    <property type="evidence" value="ECO:0007669"/>
    <property type="project" value="UniProtKB-UniRule"/>
</dbReference>
<dbReference type="CDD" id="cd00778">
    <property type="entry name" value="ProRS_core_arch_euk"/>
    <property type="match status" value="1"/>
</dbReference>
<dbReference type="FunFam" id="3.30.930.10:FF:000037">
    <property type="entry name" value="Proline--tRNA ligase"/>
    <property type="match status" value="1"/>
</dbReference>
<dbReference type="Gene3D" id="3.40.50.800">
    <property type="entry name" value="Anticodon-binding domain"/>
    <property type="match status" value="1"/>
</dbReference>
<dbReference type="Gene3D" id="3.30.930.10">
    <property type="entry name" value="Bira Bifunctional Protein, Domain 2"/>
    <property type="match status" value="1"/>
</dbReference>
<dbReference type="Gene3D" id="3.30.110.30">
    <property type="entry name" value="C-terminal domain of ProRS"/>
    <property type="match status" value="1"/>
</dbReference>
<dbReference type="HAMAP" id="MF_01571">
    <property type="entry name" value="Pro_tRNA_synth_type3"/>
    <property type="match status" value="1"/>
</dbReference>
<dbReference type="InterPro" id="IPR002314">
    <property type="entry name" value="aa-tRNA-synt_IIb"/>
</dbReference>
<dbReference type="InterPro" id="IPR006195">
    <property type="entry name" value="aa-tRNA-synth_II"/>
</dbReference>
<dbReference type="InterPro" id="IPR045864">
    <property type="entry name" value="aa-tRNA-synth_II/BPL/LPL"/>
</dbReference>
<dbReference type="InterPro" id="IPR004154">
    <property type="entry name" value="Anticodon-bd"/>
</dbReference>
<dbReference type="InterPro" id="IPR036621">
    <property type="entry name" value="Anticodon-bd_dom_sf"/>
</dbReference>
<dbReference type="InterPro" id="IPR002316">
    <property type="entry name" value="Pro-tRNA-ligase_IIa"/>
</dbReference>
<dbReference type="InterPro" id="IPR004499">
    <property type="entry name" value="Pro-tRNA-ligase_IIa_arc-type"/>
</dbReference>
<dbReference type="InterPro" id="IPR016061">
    <property type="entry name" value="Pro-tRNA_ligase_II_C"/>
</dbReference>
<dbReference type="InterPro" id="IPR017449">
    <property type="entry name" value="Pro-tRNA_synth_II"/>
</dbReference>
<dbReference type="InterPro" id="IPR033721">
    <property type="entry name" value="ProRS_core_arch_euk"/>
</dbReference>
<dbReference type="NCBIfam" id="TIGR00408">
    <property type="entry name" value="proS_fam_I"/>
    <property type="match status" value="1"/>
</dbReference>
<dbReference type="PANTHER" id="PTHR43382:SF2">
    <property type="entry name" value="BIFUNCTIONAL GLUTAMATE_PROLINE--TRNA LIGASE"/>
    <property type="match status" value="1"/>
</dbReference>
<dbReference type="PANTHER" id="PTHR43382">
    <property type="entry name" value="PROLYL-TRNA SYNTHETASE"/>
    <property type="match status" value="1"/>
</dbReference>
<dbReference type="Pfam" id="PF03129">
    <property type="entry name" value="HGTP_anticodon"/>
    <property type="match status" value="1"/>
</dbReference>
<dbReference type="Pfam" id="PF09180">
    <property type="entry name" value="ProRS-C_1"/>
    <property type="match status" value="1"/>
</dbReference>
<dbReference type="Pfam" id="PF00587">
    <property type="entry name" value="tRNA-synt_2b"/>
    <property type="match status" value="1"/>
</dbReference>
<dbReference type="PRINTS" id="PR01046">
    <property type="entry name" value="TRNASYNTHPRO"/>
</dbReference>
<dbReference type="SMART" id="SM00946">
    <property type="entry name" value="ProRS-C_1"/>
    <property type="match status" value="1"/>
</dbReference>
<dbReference type="SUPFAM" id="SSF64586">
    <property type="entry name" value="C-terminal domain of ProRS"/>
    <property type="match status" value="1"/>
</dbReference>
<dbReference type="SUPFAM" id="SSF52954">
    <property type="entry name" value="Class II aaRS ABD-related"/>
    <property type="match status" value="1"/>
</dbReference>
<dbReference type="SUPFAM" id="SSF55681">
    <property type="entry name" value="Class II aaRS and biotin synthetases"/>
    <property type="match status" value="1"/>
</dbReference>
<dbReference type="PROSITE" id="PS50862">
    <property type="entry name" value="AA_TRNA_LIGASE_II"/>
    <property type="match status" value="1"/>
</dbReference>
<protein>
    <recommendedName>
        <fullName evidence="1">Proline--tRNA ligase</fullName>
        <ecNumber evidence="1">6.1.1.15</ecNumber>
    </recommendedName>
    <alternativeName>
        <fullName evidence="1">Prolyl-tRNA synthetase</fullName>
        <shortName evidence="1">ProRS</shortName>
    </alternativeName>
</protein>
<gene>
    <name evidence="1" type="primary">proS</name>
    <name type="ordered locus">UUR10_0487</name>
</gene>
<proteinExistence type="inferred from homology"/>
<reference key="1">
    <citation type="submission" date="2008-10" db="EMBL/GenBank/DDBJ databases">
        <title>Genome sequence of Ureaplasma urealyticum serovar 10 ATCC-33699.</title>
        <authorList>
            <person name="Shrivastava S."/>
            <person name="Methe B.A."/>
            <person name="Glass J."/>
            <person name="White K."/>
            <person name="Duffy L.B."/>
        </authorList>
    </citation>
    <scope>NUCLEOTIDE SEQUENCE [LARGE SCALE GENOMIC DNA]</scope>
    <source>
        <strain>ATCC 33699 / Western</strain>
    </source>
</reference>
<sequence>MAKKLEKIITRNENFADWYTSIVNNAKLIQYTDIKGMMVFQPNAWAIWEAIKNQIDLEFKKHGVRNLAMPTLIPLSEFQKEKDHIEGFAPELFMVNQIGDKKLDNPYAIRPTSEILFCNYFKNIVNSYNDLPIKNNQWCSVMRAEKTTRPFLRNAEFHWQELHAIFASEHEADEFAKTILDVYTDFVQNYLCIPVIKGLKTPWERFAGAQKTYTIEAMMQDGQALQSATSHYLGQFFAKAYDIKFQGQDNQMHYVHQMSAGLSTRIIGALIMVHADDQGLILPPDIAFNQIAILSIFANKNPQLLTISEQIRNELSDYRLFEDHSDKGVGYKLAQQEIEGTPICILVGVKELANQQVVLVRRDTHEKINVNLIDLKSTIKKLLLDIKTNIYQKAKKQLDESIVFVNSIEELKQVIAQNKMAKAFFDGSKEDDEQIKLLTNASTRCIFDETQSGQCFYTNKKTNKLTLFARAY</sequence>
<comment type="function">
    <text evidence="1">Catalyzes the attachment of proline to tRNA(Pro) in a two-step reaction: proline is first activated by ATP to form Pro-AMP and then transferred to the acceptor end of tRNA(Pro).</text>
</comment>
<comment type="catalytic activity">
    <reaction evidence="1">
        <text>tRNA(Pro) + L-proline + ATP = L-prolyl-tRNA(Pro) + AMP + diphosphate</text>
        <dbReference type="Rhea" id="RHEA:14305"/>
        <dbReference type="Rhea" id="RHEA-COMP:9700"/>
        <dbReference type="Rhea" id="RHEA-COMP:9702"/>
        <dbReference type="ChEBI" id="CHEBI:30616"/>
        <dbReference type="ChEBI" id="CHEBI:33019"/>
        <dbReference type="ChEBI" id="CHEBI:60039"/>
        <dbReference type="ChEBI" id="CHEBI:78442"/>
        <dbReference type="ChEBI" id="CHEBI:78532"/>
        <dbReference type="ChEBI" id="CHEBI:456215"/>
        <dbReference type="EC" id="6.1.1.15"/>
    </reaction>
</comment>
<comment type="subunit">
    <text evidence="1">Homodimer.</text>
</comment>
<comment type="subcellular location">
    <subcellularLocation>
        <location evidence="1">Cytoplasm</location>
    </subcellularLocation>
</comment>
<comment type="domain">
    <text evidence="1">Consists of three domains: the N-terminal catalytic domain, the anticodon-binding domain and the C-terminal extension.</text>
</comment>
<comment type="similarity">
    <text evidence="1">Belongs to the class-II aminoacyl-tRNA synthetase family. ProS type 3 subfamily.</text>
</comment>
<organism>
    <name type="scientific">Ureaplasma urealyticum serovar 10 (strain ATCC 33699 / Western)</name>
    <dbReference type="NCBI Taxonomy" id="565575"/>
    <lineage>
        <taxon>Bacteria</taxon>
        <taxon>Bacillati</taxon>
        <taxon>Mycoplasmatota</taxon>
        <taxon>Mycoplasmoidales</taxon>
        <taxon>Mycoplasmoidaceae</taxon>
        <taxon>Ureaplasma</taxon>
    </lineage>
</organism>